<reference key="1">
    <citation type="journal article" date="2000" name="Science">
        <title>The genome sequence of Drosophila melanogaster.</title>
        <authorList>
            <person name="Adams M.D."/>
            <person name="Celniker S.E."/>
            <person name="Holt R.A."/>
            <person name="Evans C.A."/>
            <person name="Gocayne J.D."/>
            <person name="Amanatides P.G."/>
            <person name="Scherer S.E."/>
            <person name="Li P.W."/>
            <person name="Hoskins R.A."/>
            <person name="Galle R.F."/>
            <person name="George R.A."/>
            <person name="Lewis S.E."/>
            <person name="Richards S."/>
            <person name="Ashburner M."/>
            <person name="Henderson S.N."/>
            <person name="Sutton G.G."/>
            <person name="Wortman J.R."/>
            <person name="Yandell M.D."/>
            <person name="Zhang Q."/>
            <person name="Chen L.X."/>
            <person name="Brandon R.C."/>
            <person name="Rogers Y.-H.C."/>
            <person name="Blazej R.G."/>
            <person name="Champe M."/>
            <person name="Pfeiffer B.D."/>
            <person name="Wan K.H."/>
            <person name="Doyle C."/>
            <person name="Baxter E.G."/>
            <person name="Helt G."/>
            <person name="Nelson C.R."/>
            <person name="Miklos G.L.G."/>
            <person name="Abril J.F."/>
            <person name="Agbayani A."/>
            <person name="An H.-J."/>
            <person name="Andrews-Pfannkoch C."/>
            <person name="Baldwin D."/>
            <person name="Ballew R.M."/>
            <person name="Basu A."/>
            <person name="Baxendale J."/>
            <person name="Bayraktaroglu L."/>
            <person name="Beasley E.M."/>
            <person name="Beeson K.Y."/>
            <person name="Benos P.V."/>
            <person name="Berman B.P."/>
            <person name="Bhandari D."/>
            <person name="Bolshakov S."/>
            <person name="Borkova D."/>
            <person name="Botchan M.R."/>
            <person name="Bouck J."/>
            <person name="Brokstein P."/>
            <person name="Brottier P."/>
            <person name="Burtis K.C."/>
            <person name="Busam D.A."/>
            <person name="Butler H."/>
            <person name="Cadieu E."/>
            <person name="Center A."/>
            <person name="Chandra I."/>
            <person name="Cherry J.M."/>
            <person name="Cawley S."/>
            <person name="Dahlke C."/>
            <person name="Davenport L.B."/>
            <person name="Davies P."/>
            <person name="de Pablos B."/>
            <person name="Delcher A."/>
            <person name="Deng Z."/>
            <person name="Mays A.D."/>
            <person name="Dew I."/>
            <person name="Dietz S.M."/>
            <person name="Dodson K."/>
            <person name="Doup L.E."/>
            <person name="Downes M."/>
            <person name="Dugan-Rocha S."/>
            <person name="Dunkov B.C."/>
            <person name="Dunn P."/>
            <person name="Durbin K.J."/>
            <person name="Evangelista C.C."/>
            <person name="Ferraz C."/>
            <person name="Ferriera S."/>
            <person name="Fleischmann W."/>
            <person name="Fosler C."/>
            <person name="Gabrielian A.E."/>
            <person name="Garg N.S."/>
            <person name="Gelbart W.M."/>
            <person name="Glasser K."/>
            <person name="Glodek A."/>
            <person name="Gong F."/>
            <person name="Gorrell J.H."/>
            <person name="Gu Z."/>
            <person name="Guan P."/>
            <person name="Harris M."/>
            <person name="Harris N.L."/>
            <person name="Harvey D.A."/>
            <person name="Heiman T.J."/>
            <person name="Hernandez J.R."/>
            <person name="Houck J."/>
            <person name="Hostin D."/>
            <person name="Houston K.A."/>
            <person name="Howland T.J."/>
            <person name="Wei M.-H."/>
            <person name="Ibegwam C."/>
            <person name="Jalali M."/>
            <person name="Kalush F."/>
            <person name="Karpen G.H."/>
            <person name="Ke Z."/>
            <person name="Kennison J.A."/>
            <person name="Ketchum K.A."/>
            <person name="Kimmel B.E."/>
            <person name="Kodira C.D."/>
            <person name="Kraft C.L."/>
            <person name="Kravitz S."/>
            <person name="Kulp D."/>
            <person name="Lai Z."/>
            <person name="Lasko P."/>
            <person name="Lei Y."/>
            <person name="Levitsky A.A."/>
            <person name="Li J.H."/>
            <person name="Li Z."/>
            <person name="Liang Y."/>
            <person name="Lin X."/>
            <person name="Liu X."/>
            <person name="Mattei B."/>
            <person name="McIntosh T.C."/>
            <person name="McLeod M.P."/>
            <person name="McPherson D."/>
            <person name="Merkulov G."/>
            <person name="Milshina N.V."/>
            <person name="Mobarry C."/>
            <person name="Morris J."/>
            <person name="Moshrefi A."/>
            <person name="Mount S.M."/>
            <person name="Moy M."/>
            <person name="Murphy B."/>
            <person name="Murphy L."/>
            <person name="Muzny D.M."/>
            <person name="Nelson D.L."/>
            <person name="Nelson D.R."/>
            <person name="Nelson K.A."/>
            <person name="Nixon K."/>
            <person name="Nusskern D.R."/>
            <person name="Pacleb J.M."/>
            <person name="Palazzolo M."/>
            <person name="Pittman G.S."/>
            <person name="Pan S."/>
            <person name="Pollard J."/>
            <person name="Puri V."/>
            <person name="Reese M.G."/>
            <person name="Reinert K."/>
            <person name="Remington K."/>
            <person name="Saunders R.D.C."/>
            <person name="Scheeler F."/>
            <person name="Shen H."/>
            <person name="Shue B.C."/>
            <person name="Siden-Kiamos I."/>
            <person name="Simpson M."/>
            <person name="Skupski M.P."/>
            <person name="Smith T.J."/>
            <person name="Spier E."/>
            <person name="Spradling A.C."/>
            <person name="Stapleton M."/>
            <person name="Strong R."/>
            <person name="Sun E."/>
            <person name="Svirskas R."/>
            <person name="Tector C."/>
            <person name="Turner R."/>
            <person name="Venter E."/>
            <person name="Wang A.H."/>
            <person name="Wang X."/>
            <person name="Wang Z.-Y."/>
            <person name="Wassarman D.A."/>
            <person name="Weinstock G.M."/>
            <person name="Weissenbach J."/>
            <person name="Williams S.M."/>
            <person name="Woodage T."/>
            <person name="Worley K.C."/>
            <person name="Wu D."/>
            <person name="Yang S."/>
            <person name="Yao Q.A."/>
            <person name="Ye J."/>
            <person name="Yeh R.-F."/>
            <person name="Zaveri J.S."/>
            <person name="Zhan M."/>
            <person name="Zhang G."/>
            <person name="Zhao Q."/>
            <person name="Zheng L."/>
            <person name="Zheng X.H."/>
            <person name="Zhong F.N."/>
            <person name="Zhong W."/>
            <person name="Zhou X."/>
            <person name="Zhu S.C."/>
            <person name="Zhu X."/>
            <person name="Smith H.O."/>
            <person name="Gibbs R.A."/>
            <person name="Myers E.W."/>
            <person name="Rubin G.M."/>
            <person name="Venter J.C."/>
        </authorList>
    </citation>
    <scope>NUCLEOTIDE SEQUENCE [LARGE SCALE GENOMIC DNA]</scope>
    <source>
        <strain>Berkeley</strain>
    </source>
</reference>
<reference key="2">
    <citation type="journal article" date="2002" name="Genome Biol.">
        <title>Annotation of the Drosophila melanogaster euchromatic genome: a systematic review.</title>
        <authorList>
            <person name="Misra S."/>
            <person name="Crosby M.A."/>
            <person name="Mungall C.J."/>
            <person name="Matthews B.B."/>
            <person name="Campbell K.S."/>
            <person name="Hradecky P."/>
            <person name="Huang Y."/>
            <person name="Kaminker J.S."/>
            <person name="Millburn G.H."/>
            <person name="Prochnik S.E."/>
            <person name="Smith C.D."/>
            <person name="Tupy J.L."/>
            <person name="Whitfield E.J."/>
            <person name="Bayraktaroglu L."/>
            <person name="Berman B.P."/>
            <person name="Bettencourt B.R."/>
            <person name="Celniker S.E."/>
            <person name="de Grey A.D.N.J."/>
            <person name="Drysdale R.A."/>
            <person name="Harris N.L."/>
            <person name="Richter J."/>
            <person name="Russo S."/>
            <person name="Schroeder A.J."/>
            <person name="Shu S.Q."/>
            <person name="Stapleton M."/>
            <person name="Yamada C."/>
            <person name="Ashburner M."/>
            <person name="Gelbart W.M."/>
            <person name="Rubin G.M."/>
            <person name="Lewis S.E."/>
        </authorList>
    </citation>
    <scope>GENOME REANNOTATION</scope>
    <source>
        <strain>Berkeley</strain>
    </source>
</reference>
<reference key="3">
    <citation type="journal article" date="2002" name="Genome Biol.">
        <title>A Drosophila full-length cDNA resource.</title>
        <authorList>
            <person name="Stapleton M."/>
            <person name="Carlson J.W."/>
            <person name="Brokstein P."/>
            <person name="Yu C."/>
            <person name="Champe M."/>
            <person name="George R.A."/>
            <person name="Guarin H."/>
            <person name="Kronmiller B."/>
            <person name="Pacleb J.M."/>
            <person name="Park S."/>
            <person name="Wan K.H."/>
            <person name="Rubin G.M."/>
            <person name="Celniker S.E."/>
        </authorList>
    </citation>
    <scope>NUCLEOTIDE SEQUENCE [LARGE SCALE MRNA]</scope>
    <source>
        <strain>Berkeley</strain>
        <tissue>Embryo</tissue>
    </source>
</reference>
<reference evidence="4" key="4">
    <citation type="submission" date="2008-09" db="EMBL/GenBank/DDBJ databases">
        <authorList>
            <person name="Carlson J."/>
            <person name="Booth B."/>
            <person name="Frise E."/>
            <person name="Park S."/>
            <person name="Wan K."/>
            <person name="Yu C."/>
            <person name="Celniker S."/>
        </authorList>
    </citation>
    <scope>NUCLEOTIDE SEQUENCE [LARGE SCALE MRNA]</scope>
</reference>
<reference key="5">
    <citation type="journal article" date="2022" name="Cell. Mol. Life Sci.">
        <title>A Drosophila melanogaster model for TMEM43-related arrhythmogenic right ventricular cardiomyopathy type 5.</title>
        <authorList>
            <person name="Klinke N."/>
            <person name="Meyer H."/>
            <person name="Ratnavadivel S."/>
            <person name="Reinhardt M."/>
            <person name="Heinisch J.J."/>
            <person name="Malmendal A."/>
            <person name="Milting H."/>
            <person name="Paululat A."/>
        </authorList>
    </citation>
    <scope>FUNCTION</scope>
    <scope>SUBCELLULAR LOCATION</scope>
    <scope>DEVELOPMENTAL STAGE</scope>
    <scope>DISRUPTION PHENOTYPE</scope>
    <scope>TOPOLOGY</scope>
    <scope>MUTAGENESIS OF SER-333</scope>
</reference>
<keyword id="KW-0256">Endoplasmic reticulum</keyword>
<keyword id="KW-0472">Membrane</keyword>
<keyword id="KW-0539">Nucleus</keyword>
<keyword id="KW-1185">Reference proteome</keyword>
<keyword id="KW-0812">Transmembrane</keyword>
<keyword id="KW-1133">Transmembrane helix</keyword>
<accession>Q9VSB9</accession>
<accession>B5RJL3</accession>
<accession>Q8SZN7</accession>
<name>TMM43_DROME</name>
<protein>
    <recommendedName>
        <fullName>Transmembrane protein 43 homolog</fullName>
    </recommendedName>
</protein>
<evidence type="ECO:0000255" key="1"/>
<evidence type="ECO:0000269" key="2">
    <source>
    </source>
</evidence>
<evidence type="ECO:0000305" key="3"/>
<evidence type="ECO:0000312" key="4">
    <source>
        <dbReference type="EMBL" id="ACH95261.1"/>
    </source>
</evidence>
<evidence type="ECO:0000312" key="5">
    <source>
        <dbReference type="FlyBase" id="FBgn0035825"/>
    </source>
</evidence>
<evidence type="ECO:0000312" key="6">
    <source>
        <dbReference type="Proteomes" id="UP000000803"/>
    </source>
</evidence>
<gene>
    <name evidence="5" type="primary">Tmem43</name>
    <name evidence="5" type="ORF">CG8111</name>
</gene>
<sequence>MASLSETLRSHWPIALFGVILFVAGGTELYWNEGRAVHNMMALDEAHADIYSVRFTEEEQEVGLEGRIVHLSGPILVGEPLTEPDYNIQLLAVKLRRRVQMYQWVEEAVEHNYGDSVGTTHSDSRTYYYTREWRDKIVDSRNFYNRHGHTNPSHFPIESHVQVADAVFIGRYELGAEVKEKFNNYQELTSDIRPEDSGVKLHLGIYYHTNDVFNPEVGDLRLLFSFAGMEGEVFSVVGKLSGNKLVPYITSRGVPVLLVYPGGLSVQEVFRLEARAQVLHTWWWRFVGWLLIFFGVTCNTKILRLLFVRVPLLVALAPDPQFPVTGNLLIAFSLALTIAAVAWILHRPVIGACLLLAGASPYVWFTRNLVDYHRLD</sequence>
<organism evidence="6">
    <name type="scientific">Drosophila melanogaster</name>
    <name type="common">Fruit fly</name>
    <dbReference type="NCBI Taxonomy" id="7227"/>
    <lineage>
        <taxon>Eukaryota</taxon>
        <taxon>Metazoa</taxon>
        <taxon>Ecdysozoa</taxon>
        <taxon>Arthropoda</taxon>
        <taxon>Hexapoda</taxon>
        <taxon>Insecta</taxon>
        <taxon>Pterygota</taxon>
        <taxon>Neoptera</taxon>
        <taxon>Endopterygota</taxon>
        <taxon>Diptera</taxon>
        <taxon>Brachycera</taxon>
        <taxon>Muscomorpha</taxon>
        <taxon>Ephydroidea</taxon>
        <taxon>Drosophilidae</taxon>
        <taxon>Drosophila</taxon>
        <taxon>Sophophora</taxon>
    </lineage>
</organism>
<comment type="function">
    <text evidence="2">Involved in lipid metabolism and utilization.</text>
</comment>
<comment type="subcellular location">
    <subcellularLocation>
        <location evidence="2">Endoplasmic reticulum membrane</location>
        <topology evidence="2">Multi-pass membrane protein</topology>
    </subcellularLocation>
    <subcellularLocation>
        <location evidence="2">Nucleus envelope</location>
    </subcellularLocation>
</comment>
<comment type="developmental stage">
    <text evidence="2">Ubiquitously expressed at all developmental stages.</text>
</comment>
<comment type="disruption phenotype">
    <text evidence="2">Viable, fertile and no developmental defects until 5 weeks of age.</text>
</comment>
<comment type="similarity">
    <text evidence="3">Belongs to the TMEM43 family.</text>
</comment>
<feature type="chain" id="PRO_0000284502" description="Transmembrane protein 43 homolog">
    <location>
        <begin position="1"/>
        <end position="376"/>
    </location>
</feature>
<feature type="topological domain" description="Cytoplasmic" evidence="2">
    <location>
        <begin position="1"/>
        <end position="10"/>
    </location>
</feature>
<feature type="transmembrane region" description="Helical" evidence="1">
    <location>
        <begin position="11"/>
        <end position="31"/>
    </location>
</feature>
<feature type="topological domain" description="Lumenal" evidence="2">
    <location>
        <begin position="32"/>
        <end position="277"/>
    </location>
</feature>
<feature type="transmembrane region" description="Helical" evidence="1">
    <location>
        <begin position="278"/>
        <end position="298"/>
    </location>
</feature>
<feature type="topological domain" description="Cytoplasmic" evidence="3">
    <location>
        <begin position="299"/>
        <end position="323"/>
    </location>
</feature>
<feature type="transmembrane region" description="Helical" evidence="1">
    <location>
        <begin position="324"/>
        <end position="344"/>
    </location>
</feature>
<feature type="transmembrane region" description="Helical" evidence="1">
    <location>
        <begin position="345"/>
        <end position="365"/>
    </location>
</feature>
<feature type="topological domain" description="Cytoplasmic" evidence="2">
    <location>
        <begin position="366"/>
        <end position="376"/>
    </location>
</feature>
<feature type="mutagenesis site" description="No detrimental effect on development or survivability with increased lipid droplet size in fat bodies when ubiquitously overexpressed." evidence="2">
    <original>S</original>
    <variation>A</variation>
    <variation>T</variation>
    <location>
        <position position="333"/>
    </location>
</feature>
<feature type="mutagenesis site" description="Decreased survivability past pupal stage for both males and females with increased lipid droplet size in fat bodies when ubiquitously overexpressed." evidence="2">
    <original>S</original>
    <variation>E</variation>
    <location>
        <position position="333"/>
    </location>
</feature>
<feature type="mutagenesis site" description="Decreased survivability past pupal stage with increased lipid droplet size in fat bodies when ubiquitously overexpressed. Females have higher rates of survival than males." evidence="2">
    <original>S</original>
    <variation>I</variation>
    <location>
        <position position="333"/>
    </location>
</feature>
<feature type="mutagenesis site" description="No effect on protein stability, turnover rate or subcellular localization. Larval or pupal lethal with increased lipid droplet size in fat bodies when ubiquitously overexpressed. Larvae show increased levels of fatty acids and branched-chain amino acids. Cardiac arrhythmia and arrest in males when expressed in heart cells." evidence="2">
    <original>S</original>
    <variation>L</variation>
    <location>
        <position position="333"/>
    </location>
</feature>
<feature type="mutagenesis site" description="Larval and pupal lethal with increased lipid droplet size in fat bodies when ubiquitously overexpressed." evidence="2">
    <original>S</original>
    <variation>P</variation>
    <location>
        <position position="333"/>
    </location>
</feature>
<feature type="sequence conflict" description="In Ref. 3; AAL48096." evidence="3" ref="3">
    <original>P</original>
    <variation>H</variation>
    <location>
        <position position="13"/>
    </location>
</feature>
<proteinExistence type="evidence at protein level"/>
<dbReference type="EMBL" id="AE014296">
    <property type="protein sequence ID" value="AAF50506.1"/>
    <property type="molecule type" value="Genomic_DNA"/>
</dbReference>
<dbReference type="EMBL" id="AY070625">
    <property type="protein sequence ID" value="AAL48096.1"/>
    <property type="molecule type" value="mRNA"/>
</dbReference>
<dbReference type="EMBL" id="BT044487">
    <property type="protein sequence ID" value="ACH95261.1"/>
    <property type="molecule type" value="mRNA"/>
</dbReference>
<dbReference type="RefSeq" id="NP_648162.2">
    <property type="nucleotide sequence ID" value="NM_139905.4"/>
</dbReference>
<dbReference type="BioGRID" id="64308">
    <property type="interactions" value="1"/>
</dbReference>
<dbReference type="FunCoup" id="Q9VSB9">
    <property type="interactions" value="1052"/>
</dbReference>
<dbReference type="IntAct" id="Q9VSB9">
    <property type="interactions" value="1"/>
</dbReference>
<dbReference type="STRING" id="7227.FBpp0076485"/>
<dbReference type="PaxDb" id="7227-FBpp0076485"/>
<dbReference type="DNASU" id="38881"/>
<dbReference type="EnsemblMetazoa" id="FBtr0076770">
    <property type="protein sequence ID" value="FBpp0076485"/>
    <property type="gene ID" value="FBgn0035825"/>
</dbReference>
<dbReference type="GeneID" id="38881"/>
<dbReference type="KEGG" id="dme:Dmel_CG8111"/>
<dbReference type="UCSC" id="CG8111-RA">
    <property type="organism name" value="d. melanogaster"/>
</dbReference>
<dbReference type="AGR" id="FB:FBgn0035825"/>
<dbReference type="CTD" id="79188"/>
<dbReference type="FlyBase" id="FBgn0035825">
    <property type="gene designation" value="Tmem43"/>
</dbReference>
<dbReference type="VEuPathDB" id="VectorBase:FBgn0035825"/>
<dbReference type="eggNOG" id="ENOG502QSR2">
    <property type="taxonomic scope" value="Eukaryota"/>
</dbReference>
<dbReference type="GeneTree" id="ENSGT00390000009671"/>
<dbReference type="HOGENOM" id="CLU_042602_1_0_1"/>
<dbReference type="InParanoid" id="Q9VSB9"/>
<dbReference type="OMA" id="NMMALDE"/>
<dbReference type="OrthoDB" id="410725at2759"/>
<dbReference type="PhylomeDB" id="Q9VSB9"/>
<dbReference type="BioGRID-ORCS" id="38881">
    <property type="hits" value="0 hits in 1 CRISPR screen"/>
</dbReference>
<dbReference type="GenomeRNAi" id="38881"/>
<dbReference type="PRO" id="PR:Q9VSB9"/>
<dbReference type="Proteomes" id="UP000000803">
    <property type="component" value="Chromosome 3L"/>
</dbReference>
<dbReference type="Bgee" id="FBgn0035825">
    <property type="expression patterns" value="Expressed in adult middle midgut class II enteroendocrine cell in adult midgut (Drosophila) and 88 other cell types or tissues"/>
</dbReference>
<dbReference type="ExpressionAtlas" id="Q9VSB9">
    <property type="expression patterns" value="baseline and differential"/>
</dbReference>
<dbReference type="GO" id="GO:0005789">
    <property type="term" value="C:endoplasmic reticulum membrane"/>
    <property type="evidence" value="ECO:0000314"/>
    <property type="project" value="FlyBase"/>
</dbReference>
<dbReference type="GO" id="GO:0005635">
    <property type="term" value="C:nuclear envelope"/>
    <property type="evidence" value="ECO:0000314"/>
    <property type="project" value="FlyBase"/>
</dbReference>
<dbReference type="GO" id="GO:0005637">
    <property type="term" value="C:nuclear inner membrane"/>
    <property type="evidence" value="ECO:0000318"/>
    <property type="project" value="GO_Central"/>
</dbReference>
<dbReference type="GO" id="GO:0006629">
    <property type="term" value="P:lipid metabolic process"/>
    <property type="evidence" value="ECO:0000315"/>
    <property type="project" value="FlyBase"/>
</dbReference>
<dbReference type="GO" id="GO:0071763">
    <property type="term" value="P:nuclear membrane organization"/>
    <property type="evidence" value="ECO:0000318"/>
    <property type="project" value="GO_Central"/>
</dbReference>
<dbReference type="InterPro" id="IPR012430">
    <property type="entry name" value="TMEM43_fam"/>
</dbReference>
<dbReference type="PANTHER" id="PTHR13416">
    <property type="match status" value="1"/>
</dbReference>
<dbReference type="PANTHER" id="PTHR13416:SF2">
    <property type="entry name" value="TRANSMEMBRANE PROTEIN 43"/>
    <property type="match status" value="1"/>
</dbReference>
<dbReference type="Pfam" id="PF07787">
    <property type="entry name" value="TMEM43"/>
    <property type="match status" value="1"/>
</dbReference>